<reference key="1">
    <citation type="journal article" date="2004" name="Proc. Natl. Acad. Sci. U.S.A.">
        <title>Genome sequence of the enterobacterial phytopathogen Erwinia carotovora subsp. atroseptica and characterization of virulence factors.</title>
        <authorList>
            <person name="Bell K.S."/>
            <person name="Sebaihia M."/>
            <person name="Pritchard L."/>
            <person name="Holden M.T.G."/>
            <person name="Hyman L.J."/>
            <person name="Holeva M.C."/>
            <person name="Thomson N.R."/>
            <person name="Bentley S.D."/>
            <person name="Churcher L.J.C."/>
            <person name="Mungall K."/>
            <person name="Atkin R."/>
            <person name="Bason N."/>
            <person name="Brooks K."/>
            <person name="Chillingworth T."/>
            <person name="Clark K."/>
            <person name="Doggett J."/>
            <person name="Fraser A."/>
            <person name="Hance Z."/>
            <person name="Hauser H."/>
            <person name="Jagels K."/>
            <person name="Moule S."/>
            <person name="Norbertczak H."/>
            <person name="Ormond D."/>
            <person name="Price C."/>
            <person name="Quail M.A."/>
            <person name="Sanders M."/>
            <person name="Walker D."/>
            <person name="Whitehead S."/>
            <person name="Salmond G.P.C."/>
            <person name="Birch P.R.J."/>
            <person name="Parkhill J."/>
            <person name="Toth I.K."/>
        </authorList>
    </citation>
    <scope>NUCLEOTIDE SEQUENCE [LARGE SCALE GENOMIC DNA]</scope>
    <source>
        <strain>SCRI 1043 / ATCC BAA-672</strain>
    </source>
</reference>
<accession>Q6D4S2</accession>
<protein>
    <recommendedName>
        <fullName evidence="1">Cardiolipin synthase A</fullName>
        <shortName evidence="1">CL synthase</shortName>
        <ecNumber evidence="1">2.7.8.-</ecNumber>
    </recommendedName>
</protein>
<sequence length="486" mass="55249">MSTFYTVISWLLVFSYWLLIAGVTLRILMKRRAVPSAMAWLLVIYILPLVGIVAYLSFGELHLGKRRAERASKMWPSTAKWLRELKEYRRIFATENSEVASALFQLCERRQGVGGVKGNQLQLMTTFDDTIKALLRDIELARNNIEMVFYIWQPGGLVEQVTSSLISAARRGVHCRILLDSAGSVQFFRQHHPELMRTAGIEVVEALKVNLFRAFLRRMDLRQHRKIILIDSRIAYTGSMNMVDPRLFKQDAGVGQWIDLMARIEGPVATTLGIIYCCDWEMETGKRLLPPPPDVNVMPFEQESGHTIQVIASGPGYPEEMIHQALLTSVYSARKQLIMTTPYFVPSDDLLHAICTAAQRGVDVSIIVPHKNDSVLVGWASRAFFTELLAAGVKIYQFKDGLLHTKSVLVDGQLSLVGTVNLDMRSLWLNFEITLVIDDAGFGSDLACVQEDYIARSRLLNATQWQNRPYWQRIVERLFYFFSPLL</sequence>
<gene>
    <name evidence="1" type="primary">clsA</name>
    <name type="synonym">cls</name>
    <name type="ordered locus">ECA2318</name>
</gene>
<organism>
    <name type="scientific">Pectobacterium atrosepticum (strain SCRI 1043 / ATCC BAA-672)</name>
    <name type="common">Erwinia carotovora subsp. atroseptica</name>
    <dbReference type="NCBI Taxonomy" id="218491"/>
    <lineage>
        <taxon>Bacteria</taxon>
        <taxon>Pseudomonadati</taxon>
        <taxon>Pseudomonadota</taxon>
        <taxon>Gammaproteobacteria</taxon>
        <taxon>Enterobacterales</taxon>
        <taxon>Pectobacteriaceae</taxon>
        <taxon>Pectobacterium</taxon>
    </lineage>
</organism>
<name>CLSA_PECAS</name>
<comment type="function">
    <text evidence="1">Catalyzes the reversible phosphatidyl group transfer from one phosphatidylglycerol molecule to another to form cardiolipin (CL) (diphosphatidylglycerol) and glycerol.</text>
</comment>
<comment type="catalytic activity">
    <reaction evidence="1">
        <text>2 a 1,2-diacyl-sn-glycero-3-phospho-(1'-sn-glycerol) = a cardiolipin + glycerol</text>
        <dbReference type="Rhea" id="RHEA:31451"/>
        <dbReference type="ChEBI" id="CHEBI:17754"/>
        <dbReference type="ChEBI" id="CHEBI:62237"/>
        <dbReference type="ChEBI" id="CHEBI:64716"/>
    </reaction>
</comment>
<comment type="subcellular location">
    <subcellularLocation>
        <location evidence="1">Cell inner membrane</location>
        <topology evidence="1">Multi-pass membrane protein</topology>
    </subcellularLocation>
</comment>
<comment type="similarity">
    <text evidence="1">Belongs to the phospholipase D family. Cardiolipin synthase subfamily. ClsA sub-subfamily.</text>
</comment>
<feature type="chain" id="PRO_1000077498" description="Cardiolipin synthase A">
    <location>
        <begin position="1"/>
        <end position="486"/>
    </location>
</feature>
<feature type="transmembrane region" description="Helical" evidence="1">
    <location>
        <begin position="3"/>
        <end position="23"/>
    </location>
</feature>
<feature type="transmembrane region" description="Helical" evidence="1">
    <location>
        <begin position="38"/>
        <end position="58"/>
    </location>
</feature>
<feature type="domain" description="PLD phosphodiesterase 1" evidence="1">
    <location>
        <begin position="219"/>
        <end position="246"/>
    </location>
</feature>
<feature type="domain" description="PLD phosphodiesterase 2" evidence="1">
    <location>
        <begin position="399"/>
        <end position="426"/>
    </location>
</feature>
<feature type="active site" evidence="1">
    <location>
        <position position="224"/>
    </location>
</feature>
<feature type="active site" evidence="1">
    <location>
        <position position="226"/>
    </location>
</feature>
<feature type="active site" evidence="1">
    <location>
        <position position="231"/>
    </location>
</feature>
<feature type="active site" evidence="1">
    <location>
        <position position="404"/>
    </location>
</feature>
<feature type="active site" evidence="1">
    <location>
        <position position="406"/>
    </location>
</feature>
<feature type="active site" evidence="1">
    <location>
        <position position="411"/>
    </location>
</feature>
<keyword id="KW-0997">Cell inner membrane</keyword>
<keyword id="KW-1003">Cell membrane</keyword>
<keyword id="KW-0444">Lipid biosynthesis</keyword>
<keyword id="KW-0443">Lipid metabolism</keyword>
<keyword id="KW-0472">Membrane</keyword>
<keyword id="KW-0594">Phospholipid biosynthesis</keyword>
<keyword id="KW-1208">Phospholipid metabolism</keyword>
<keyword id="KW-1185">Reference proteome</keyword>
<keyword id="KW-0677">Repeat</keyword>
<keyword id="KW-0808">Transferase</keyword>
<keyword id="KW-0812">Transmembrane</keyword>
<keyword id="KW-1133">Transmembrane helix</keyword>
<evidence type="ECO:0000255" key="1">
    <source>
        <dbReference type="HAMAP-Rule" id="MF_00190"/>
    </source>
</evidence>
<proteinExistence type="inferred from homology"/>
<dbReference type="EC" id="2.7.8.-" evidence="1"/>
<dbReference type="EMBL" id="BX950851">
    <property type="protein sequence ID" value="CAG75221.1"/>
    <property type="molecule type" value="Genomic_DNA"/>
</dbReference>
<dbReference type="RefSeq" id="WP_011093875.1">
    <property type="nucleotide sequence ID" value="NC_004547.2"/>
</dbReference>
<dbReference type="SMR" id="Q6D4S2"/>
<dbReference type="STRING" id="218491.ECA2318"/>
<dbReference type="GeneID" id="57208965"/>
<dbReference type="KEGG" id="eca:ECA2318"/>
<dbReference type="PATRIC" id="fig|218491.5.peg.2344"/>
<dbReference type="eggNOG" id="COG1502">
    <property type="taxonomic scope" value="Bacteria"/>
</dbReference>
<dbReference type="HOGENOM" id="CLU_038053_1_0_6"/>
<dbReference type="OrthoDB" id="9814092at2"/>
<dbReference type="Proteomes" id="UP000007966">
    <property type="component" value="Chromosome"/>
</dbReference>
<dbReference type="GO" id="GO:0005886">
    <property type="term" value="C:plasma membrane"/>
    <property type="evidence" value="ECO:0007669"/>
    <property type="project" value="UniProtKB-SubCell"/>
</dbReference>
<dbReference type="GO" id="GO:0008808">
    <property type="term" value="F:cardiolipin synthase activity"/>
    <property type="evidence" value="ECO:0007669"/>
    <property type="project" value="InterPro"/>
</dbReference>
<dbReference type="GO" id="GO:0032049">
    <property type="term" value="P:cardiolipin biosynthetic process"/>
    <property type="evidence" value="ECO:0007669"/>
    <property type="project" value="InterPro"/>
</dbReference>
<dbReference type="CDD" id="cd09152">
    <property type="entry name" value="PLDc_EcCLS_like_1"/>
    <property type="match status" value="1"/>
</dbReference>
<dbReference type="CDD" id="cd09158">
    <property type="entry name" value="PLDc_EcCLS_like_2"/>
    <property type="match status" value="1"/>
</dbReference>
<dbReference type="FunFam" id="3.30.870.10:FF:000002">
    <property type="entry name" value="Cardiolipin synthase A"/>
    <property type="match status" value="1"/>
</dbReference>
<dbReference type="FunFam" id="3.30.870.10:FF:000003">
    <property type="entry name" value="Cardiolipin synthase A"/>
    <property type="match status" value="1"/>
</dbReference>
<dbReference type="Gene3D" id="3.30.870.10">
    <property type="entry name" value="Endonuclease Chain A"/>
    <property type="match status" value="2"/>
</dbReference>
<dbReference type="HAMAP" id="MF_00190">
    <property type="entry name" value="Cardiolipin_synth_ClsA"/>
    <property type="match status" value="1"/>
</dbReference>
<dbReference type="InterPro" id="IPR022924">
    <property type="entry name" value="Cardiolipin_synthase"/>
</dbReference>
<dbReference type="InterPro" id="IPR030840">
    <property type="entry name" value="CL_synthase_A"/>
</dbReference>
<dbReference type="InterPro" id="IPR027379">
    <property type="entry name" value="CLS_N"/>
</dbReference>
<dbReference type="InterPro" id="IPR025202">
    <property type="entry name" value="PLD-like_dom"/>
</dbReference>
<dbReference type="InterPro" id="IPR001736">
    <property type="entry name" value="PLipase_D/transphosphatidylase"/>
</dbReference>
<dbReference type="NCBIfam" id="TIGR04265">
    <property type="entry name" value="bac_cardiolipin"/>
    <property type="match status" value="1"/>
</dbReference>
<dbReference type="PANTHER" id="PTHR21248">
    <property type="entry name" value="CARDIOLIPIN SYNTHASE"/>
    <property type="match status" value="1"/>
</dbReference>
<dbReference type="PANTHER" id="PTHR21248:SF22">
    <property type="entry name" value="PHOSPHOLIPASE D"/>
    <property type="match status" value="1"/>
</dbReference>
<dbReference type="Pfam" id="PF13091">
    <property type="entry name" value="PLDc_2"/>
    <property type="match status" value="2"/>
</dbReference>
<dbReference type="Pfam" id="PF13396">
    <property type="entry name" value="PLDc_N"/>
    <property type="match status" value="1"/>
</dbReference>
<dbReference type="SMART" id="SM00155">
    <property type="entry name" value="PLDc"/>
    <property type="match status" value="2"/>
</dbReference>
<dbReference type="SUPFAM" id="SSF56024">
    <property type="entry name" value="Phospholipase D/nuclease"/>
    <property type="match status" value="2"/>
</dbReference>
<dbReference type="PROSITE" id="PS50035">
    <property type="entry name" value="PLD"/>
    <property type="match status" value="2"/>
</dbReference>